<organism>
    <name type="scientific">Phenylobacterium zucineum (strain HLK1)</name>
    <dbReference type="NCBI Taxonomy" id="450851"/>
    <lineage>
        <taxon>Bacteria</taxon>
        <taxon>Pseudomonadati</taxon>
        <taxon>Pseudomonadota</taxon>
        <taxon>Alphaproteobacteria</taxon>
        <taxon>Caulobacterales</taxon>
        <taxon>Caulobacteraceae</taxon>
        <taxon>Phenylobacterium</taxon>
    </lineage>
</organism>
<comment type="function">
    <text evidence="1">Catalyzes the methylthiolation of N6-(dimethylallyl)adenosine (i(6)A), leading to the formation of 2-methylthio-N6-(dimethylallyl)adenosine (ms(2)i(6)A) at position 37 in tRNAs that read codons beginning with uridine.</text>
</comment>
<comment type="catalytic activity">
    <reaction evidence="1">
        <text>N(6)-dimethylallyladenosine(37) in tRNA + (sulfur carrier)-SH + AH2 + 2 S-adenosyl-L-methionine = 2-methylsulfanyl-N(6)-dimethylallyladenosine(37) in tRNA + (sulfur carrier)-H + 5'-deoxyadenosine + L-methionine + A + S-adenosyl-L-homocysteine + 2 H(+)</text>
        <dbReference type="Rhea" id="RHEA:37067"/>
        <dbReference type="Rhea" id="RHEA-COMP:10375"/>
        <dbReference type="Rhea" id="RHEA-COMP:10376"/>
        <dbReference type="Rhea" id="RHEA-COMP:14737"/>
        <dbReference type="Rhea" id="RHEA-COMP:14739"/>
        <dbReference type="ChEBI" id="CHEBI:13193"/>
        <dbReference type="ChEBI" id="CHEBI:15378"/>
        <dbReference type="ChEBI" id="CHEBI:17319"/>
        <dbReference type="ChEBI" id="CHEBI:17499"/>
        <dbReference type="ChEBI" id="CHEBI:29917"/>
        <dbReference type="ChEBI" id="CHEBI:57844"/>
        <dbReference type="ChEBI" id="CHEBI:57856"/>
        <dbReference type="ChEBI" id="CHEBI:59789"/>
        <dbReference type="ChEBI" id="CHEBI:64428"/>
        <dbReference type="ChEBI" id="CHEBI:74415"/>
        <dbReference type="ChEBI" id="CHEBI:74417"/>
        <dbReference type="EC" id="2.8.4.3"/>
    </reaction>
</comment>
<comment type="cofactor">
    <cofactor evidence="1">
        <name>[4Fe-4S] cluster</name>
        <dbReference type="ChEBI" id="CHEBI:49883"/>
    </cofactor>
    <text evidence="1">Binds 2 [4Fe-4S] clusters. One cluster is coordinated with 3 cysteines and an exchangeable S-adenosyl-L-methionine.</text>
</comment>
<comment type="subunit">
    <text evidence="1">Monomer.</text>
</comment>
<comment type="subcellular location">
    <subcellularLocation>
        <location evidence="1">Cytoplasm</location>
    </subcellularLocation>
</comment>
<comment type="similarity">
    <text evidence="1">Belongs to the methylthiotransferase family. MiaB subfamily.</text>
</comment>
<keyword id="KW-0004">4Fe-4S</keyword>
<keyword id="KW-0963">Cytoplasm</keyword>
<keyword id="KW-0408">Iron</keyword>
<keyword id="KW-0411">Iron-sulfur</keyword>
<keyword id="KW-0479">Metal-binding</keyword>
<keyword id="KW-1185">Reference proteome</keyword>
<keyword id="KW-0949">S-adenosyl-L-methionine</keyword>
<keyword id="KW-0808">Transferase</keyword>
<keyword id="KW-0819">tRNA processing</keyword>
<name>MIAB_PHEZH</name>
<sequence>MSEPAPAKRLYIKTYGCQMNVYDSERMADVLAPLGYGVTDDPAAADLVVLNTCHIREKATEKVYSELGQIKRLKEARRAEGQGMTIAVAGCVAQAEGEEIMRRQPAVDLVVGPQAYHQLPELIARAHRARGERLAADFAPDEKFDALATERRPTGVTAFLTVQEGCDKFCTFCVVPYTRGGEWSRPAEAIEAEARALAAKGVREVTLLGQNVNAYDGANGQGAGLAGLVRRLAKIPGLDRIRYTTSHPRDMDDDLIAAHAEVPELMPYLHLPVQAGSDRILRAMNRAHTAESYLRVIEKVRVARPDIAISGDFIVGFPGEREADFEATLQLVREVGYASCFSFKYSRRPGTPAAALPGQVAEEVKEERLQRLQALLEQQQLAFNAAQAGRVLPVLFEKTGRHPGQLIGRSPYLQAVHAHAPDRLIGQIVPVKVESGGRNSLAGVLELETA</sequence>
<gene>
    <name evidence="1" type="primary">miaB</name>
    <name type="ordered locus">PHZ_c3454</name>
</gene>
<protein>
    <recommendedName>
        <fullName evidence="1">tRNA-2-methylthio-N(6)-dimethylallyladenosine synthase</fullName>
        <ecNumber evidence="1">2.8.4.3</ecNumber>
    </recommendedName>
    <alternativeName>
        <fullName evidence="1">(Dimethylallyl)adenosine tRNA methylthiotransferase MiaB</fullName>
    </alternativeName>
    <alternativeName>
        <fullName evidence="1">tRNA-i(6)A37 methylthiotransferase</fullName>
    </alternativeName>
</protein>
<reference key="1">
    <citation type="journal article" date="2008" name="BMC Genomics">
        <title>Complete genome of Phenylobacterium zucineum - a novel facultative intracellular bacterium isolated from human erythroleukemia cell line K562.</title>
        <authorList>
            <person name="Luo Y."/>
            <person name="Xu X."/>
            <person name="Ding Z."/>
            <person name="Liu Z."/>
            <person name="Zhang B."/>
            <person name="Yan Z."/>
            <person name="Sun J."/>
            <person name="Hu S."/>
            <person name="Hu X."/>
        </authorList>
    </citation>
    <scope>NUCLEOTIDE SEQUENCE [LARGE SCALE GENOMIC DNA]</scope>
    <source>
        <strain>HLK1</strain>
    </source>
</reference>
<accession>B4RC70</accession>
<feature type="chain" id="PRO_0000374434" description="tRNA-2-methylthio-N(6)-dimethylallyladenosine synthase">
    <location>
        <begin position="1"/>
        <end position="450"/>
    </location>
</feature>
<feature type="domain" description="MTTase N-terminal" evidence="1">
    <location>
        <begin position="8"/>
        <end position="128"/>
    </location>
</feature>
<feature type="domain" description="Radical SAM core" evidence="2">
    <location>
        <begin position="152"/>
        <end position="382"/>
    </location>
</feature>
<feature type="domain" description="TRAM" evidence="1">
    <location>
        <begin position="385"/>
        <end position="447"/>
    </location>
</feature>
<feature type="binding site" evidence="1">
    <location>
        <position position="17"/>
    </location>
    <ligand>
        <name>[4Fe-4S] cluster</name>
        <dbReference type="ChEBI" id="CHEBI:49883"/>
        <label>1</label>
    </ligand>
</feature>
<feature type="binding site" evidence="1">
    <location>
        <position position="53"/>
    </location>
    <ligand>
        <name>[4Fe-4S] cluster</name>
        <dbReference type="ChEBI" id="CHEBI:49883"/>
        <label>1</label>
    </ligand>
</feature>
<feature type="binding site" evidence="1">
    <location>
        <position position="91"/>
    </location>
    <ligand>
        <name>[4Fe-4S] cluster</name>
        <dbReference type="ChEBI" id="CHEBI:49883"/>
        <label>1</label>
    </ligand>
</feature>
<feature type="binding site" evidence="1">
    <location>
        <position position="166"/>
    </location>
    <ligand>
        <name>[4Fe-4S] cluster</name>
        <dbReference type="ChEBI" id="CHEBI:49883"/>
        <label>2</label>
        <note>4Fe-4S-S-AdoMet</note>
    </ligand>
</feature>
<feature type="binding site" evidence="1">
    <location>
        <position position="170"/>
    </location>
    <ligand>
        <name>[4Fe-4S] cluster</name>
        <dbReference type="ChEBI" id="CHEBI:49883"/>
        <label>2</label>
        <note>4Fe-4S-S-AdoMet</note>
    </ligand>
</feature>
<feature type="binding site" evidence="1">
    <location>
        <position position="173"/>
    </location>
    <ligand>
        <name>[4Fe-4S] cluster</name>
        <dbReference type="ChEBI" id="CHEBI:49883"/>
        <label>2</label>
        <note>4Fe-4S-S-AdoMet</note>
    </ligand>
</feature>
<proteinExistence type="inferred from homology"/>
<evidence type="ECO:0000255" key="1">
    <source>
        <dbReference type="HAMAP-Rule" id="MF_01864"/>
    </source>
</evidence>
<evidence type="ECO:0000255" key="2">
    <source>
        <dbReference type="PROSITE-ProRule" id="PRU01266"/>
    </source>
</evidence>
<dbReference type="EC" id="2.8.4.3" evidence="1"/>
<dbReference type="EMBL" id="CP000747">
    <property type="protein sequence ID" value="ACG79863.1"/>
    <property type="molecule type" value="Genomic_DNA"/>
</dbReference>
<dbReference type="RefSeq" id="WP_012524001.1">
    <property type="nucleotide sequence ID" value="NC_011144.1"/>
</dbReference>
<dbReference type="SMR" id="B4RC70"/>
<dbReference type="STRING" id="450851.PHZ_c3454"/>
<dbReference type="KEGG" id="pzu:PHZ_c3454"/>
<dbReference type="eggNOG" id="COG0621">
    <property type="taxonomic scope" value="Bacteria"/>
</dbReference>
<dbReference type="HOGENOM" id="CLU_018697_2_0_5"/>
<dbReference type="OrthoDB" id="9805215at2"/>
<dbReference type="Proteomes" id="UP000001868">
    <property type="component" value="Chromosome"/>
</dbReference>
<dbReference type="GO" id="GO:0005829">
    <property type="term" value="C:cytosol"/>
    <property type="evidence" value="ECO:0007669"/>
    <property type="project" value="TreeGrafter"/>
</dbReference>
<dbReference type="GO" id="GO:0051539">
    <property type="term" value="F:4 iron, 4 sulfur cluster binding"/>
    <property type="evidence" value="ECO:0007669"/>
    <property type="project" value="UniProtKB-UniRule"/>
</dbReference>
<dbReference type="GO" id="GO:0046872">
    <property type="term" value="F:metal ion binding"/>
    <property type="evidence" value="ECO:0007669"/>
    <property type="project" value="UniProtKB-KW"/>
</dbReference>
<dbReference type="GO" id="GO:0035597">
    <property type="term" value="F:N6-isopentenyladenosine methylthiotransferase activity"/>
    <property type="evidence" value="ECO:0007669"/>
    <property type="project" value="TreeGrafter"/>
</dbReference>
<dbReference type="CDD" id="cd01335">
    <property type="entry name" value="Radical_SAM"/>
    <property type="match status" value="1"/>
</dbReference>
<dbReference type="FunFam" id="3.40.50.12160:FF:000003">
    <property type="entry name" value="CDK5 regulatory subunit-associated protein 1"/>
    <property type="match status" value="1"/>
</dbReference>
<dbReference type="FunFam" id="3.80.30.20:FF:000001">
    <property type="entry name" value="tRNA-2-methylthio-N(6)-dimethylallyladenosine synthase 2"/>
    <property type="match status" value="1"/>
</dbReference>
<dbReference type="Gene3D" id="3.40.50.12160">
    <property type="entry name" value="Methylthiotransferase, N-terminal domain"/>
    <property type="match status" value="1"/>
</dbReference>
<dbReference type="Gene3D" id="3.80.30.20">
    <property type="entry name" value="tm_1862 like domain"/>
    <property type="match status" value="1"/>
</dbReference>
<dbReference type="HAMAP" id="MF_01864">
    <property type="entry name" value="tRNA_metthiotr_MiaB"/>
    <property type="match status" value="1"/>
</dbReference>
<dbReference type="InterPro" id="IPR006638">
    <property type="entry name" value="Elp3/MiaA/NifB-like_rSAM"/>
</dbReference>
<dbReference type="InterPro" id="IPR005839">
    <property type="entry name" value="Methylthiotransferase"/>
</dbReference>
<dbReference type="InterPro" id="IPR020612">
    <property type="entry name" value="Methylthiotransferase_CS"/>
</dbReference>
<dbReference type="InterPro" id="IPR013848">
    <property type="entry name" value="Methylthiotransferase_N"/>
</dbReference>
<dbReference type="InterPro" id="IPR038135">
    <property type="entry name" value="Methylthiotransferase_N_sf"/>
</dbReference>
<dbReference type="InterPro" id="IPR006463">
    <property type="entry name" value="MiaB_methiolase"/>
</dbReference>
<dbReference type="InterPro" id="IPR007197">
    <property type="entry name" value="rSAM"/>
</dbReference>
<dbReference type="InterPro" id="IPR023404">
    <property type="entry name" value="rSAM_horseshoe"/>
</dbReference>
<dbReference type="InterPro" id="IPR002792">
    <property type="entry name" value="TRAM_dom"/>
</dbReference>
<dbReference type="NCBIfam" id="TIGR01574">
    <property type="entry name" value="miaB-methiolase"/>
    <property type="match status" value="1"/>
</dbReference>
<dbReference type="NCBIfam" id="TIGR00089">
    <property type="entry name" value="MiaB/RimO family radical SAM methylthiotransferase"/>
    <property type="match status" value="1"/>
</dbReference>
<dbReference type="PANTHER" id="PTHR43020">
    <property type="entry name" value="CDK5 REGULATORY SUBUNIT-ASSOCIATED PROTEIN 1"/>
    <property type="match status" value="1"/>
</dbReference>
<dbReference type="PANTHER" id="PTHR43020:SF2">
    <property type="entry name" value="MITOCHONDRIAL TRNA METHYLTHIOTRANSFERASE CDK5RAP1"/>
    <property type="match status" value="1"/>
</dbReference>
<dbReference type="Pfam" id="PF04055">
    <property type="entry name" value="Radical_SAM"/>
    <property type="match status" value="1"/>
</dbReference>
<dbReference type="Pfam" id="PF01938">
    <property type="entry name" value="TRAM"/>
    <property type="match status" value="1"/>
</dbReference>
<dbReference type="Pfam" id="PF00919">
    <property type="entry name" value="UPF0004"/>
    <property type="match status" value="1"/>
</dbReference>
<dbReference type="SFLD" id="SFLDF00273">
    <property type="entry name" value="(dimethylallyl)adenosine_tRNA"/>
    <property type="match status" value="1"/>
</dbReference>
<dbReference type="SFLD" id="SFLDG01082">
    <property type="entry name" value="B12-binding_domain_containing"/>
    <property type="match status" value="1"/>
</dbReference>
<dbReference type="SFLD" id="SFLDG01061">
    <property type="entry name" value="methylthiotransferase"/>
    <property type="match status" value="1"/>
</dbReference>
<dbReference type="SMART" id="SM00729">
    <property type="entry name" value="Elp3"/>
    <property type="match status" value="1"/>
</dbReference>
<dbReference type="SUPFAM" id="SSF102114">
    <property type="entry name" value="Radical SAM enzymes"/>
    <property type="match status" value="1"/>
</dbReference>
<dbReference type="PROSITE" id="PS51449">
    <property type="entry name" value="MTTASE_N"/>
    <property type="match status" value="1"/>
</dbReference>
<dbReference type="PROSITE" id="PS01278">
    <property type="entry name" value="MTTASE_RADICAL"/>
    <property type="match status" value="1"/>
</dbReference>
<dbReference type="PROSITE" id="PS51918">
    <property type="entry name" value="RADICAL_SAM"/>
    <property type="match status" value="1"/>
</dbReference>
<dbReference type="PROSITE" id="PS50926">
    <property type="entry name" value="TRAM"/>
    <property type="match status" value="1"/>
</dbReference>